<dbReference type="EMBL" id="M91036">
    <property type="protein sequence ID" value="AAB59429.1"/>
    <property type="molecule type" value="Genomic_DNA"/>
</dbReference>
<dbReference type="EMBL" id="M91037">
    <property type="protein sequence ID" value="AAA58493.1"/>
    <property type="molecule type" value="Genomic_DNA"/>
</dbReference>
<dbReference type="EMBL" id="V00513">
    <property type="protein sequence ID" value="CAA23771.1"/>
    <property type="molecule type" value="Genomic_DNA"/>
</dbReference>
<dbReference type="EMBL" id="V00514">
    <property type="protein sequence ID" value="CAA23772.1"/>
    <property type="molecule type" value="Genomic_DNA"/>
</dbReference>
<dbReference type="EMBL" id="J00176">
    <property type="protein sequence ID" value="AAA52637.1"/>
    <property type="molecule type" value="Genomic_DNA"/>
</dbReference>
<dbReference type="EMBL" id="U01317">
    <property type="protein sequence ID" value="AAA16332.1"/>
    <property type="molecule type" value="Genomic_DNA"/>
</dbReference>
<dbReference type="EMBL" id="AF130098">
    <property type="protein sequence ID" value="AAG35523.1"/>
    <property type="molecule type" value="mRNA"/>
</dbReference>
<dbReference type="EMBL" id="CH471064">
    <property type="protein sequence ID" value="EAW68804.1"/>
    <property type="molecule type" value="Genomic_DNA"/>
</dbReference>
<dbReference type="EMBL" id="BC010913">
    <property type="protein sequence ID" value="AAH10913.1"/>
    <property type="molecule type" value="mRNA"/>
</dbReference>
<dbReference type="EMBL" id="BC020719">
    <property type="protein sequence ID" value="AAH20719.1"/>
    <property type="molecule type" value="mRNA"/>
</dbReference>
<dbReference type="EMBL" id="AF487523">
    <property type="protein sequence ID" value="AAL99545.1"/>
    <property type="molecule type" value="Genomic_DNA"/>
</dbReference>
<dbReference type="CCDS" id="CCDS7754.1"/>
<dbReference type="PIR" id="A90803">
    <property type="entry name" value="HGHUA"/>
</dbReference>
<dbReference type="RefSeq" id="NP_000550.2">
    <property type="nucleotide sequence ID" value="NM_000559.2"/>
</dbReference>
<dbReference type="PDB" id="1I3D">
    <property type="method" value="X-ray"/>
    <property type="resolution" value="1.70 A"/>
    <property type="chains" value="A/B=2-147"/>
</dbReference>
<dbReference type="PDB" id="1I3E">
    <property type="method" value="X-ray"/>
    <property type="resolution" value="1.86 A"/>
    <property type="chains" value="A/B=2-147"/>
</dbReference>
<dbReference type="PDBsum" id="1I3D"/>
<dbReference type="PDBsum" id="1I3E"/>
<dbReference type="SMR" id="P69891"/>
<dbReference type="BioGRID" id="109297">
    <property type="interactions" value="21"/>
</dbReference>
<dbReference type="ComplexPortal" id="CPX-2930">
    <property type="entry name" value="Hemoglobin Portland-1 Variant 1 complex"/>
</dbReference>
<dbReference type="ComplexPortal" id="CPX-2932">
    <property type="entry name" value="Hemoglobin HbF Variant 1 complex"/>
</dbReference>
<dbReference type="ComplexPortal" id="CPX-2934">
    <property type="entry name" value="Hemoglobin Bart's complex"/>
</dbReference>
<dbReference type="CORUM" id="P69891"/>
<dbReference type="FunCoup" id="P69891">
    <property type="interactions" value="15"/>
</dbReference>
<dbReference type="IntAct" id="P69891">
    <property type="interactions" value="4"/>
</dbReference>
<dbReference type="GlyGen" id="P69891">
    <property type="glycosylation" value="1 site, 1 O-linked glycan (1 site)"/>
</dbReference>
<dbReference type="iPTMnet" id="P69891"/>
<dbReference type="PhosphoSitePlus" id="P69891"/>
<dbReference type="BioMuta" id="HBG1"/>
<dbReference type="DMDM" id="56749860"/>
<dbReference type="jPOST" id="P69891"/>
<dbReference type="MassIVE" id="P69891"/>
<dbReference type="PeptideAtlas" id="P69891"/>
<dbReference type="ProteomicsDB" id="57545"/>
<dbReference type="Pumba" id="P69891"/>
<dbReference type="ABCD" id="P69891">
    <property type="antibodies" value="1 sequenced antibody"/>
</dbReference>
<dbReference type="Antibodypedia" id="23583">
    <property type="antibodies" value="182 antibodies from 28 providers"/>
</dbReference>
<dbReference type="DNASU" id="3047"/>
<dbReference type="Ensembl" id="ENST00000330597.5">
    <property type="protein sequence ID" value="ENSP00000327431.4"/>
    <property type="gene ID" value="ENSG00000213934.9"/>
</dbReference>
<dbReference type="GeneID" id="3047"/>
<dbReference type="KEGG" id="hsa:3047"/>
<dbReference type="MANE-Select" id="ENST00000330597.5">
    <property type="protein sequence ID" value="ENSP00000327431.4"/>
    <property type="RefSeq nucleotide sequence ID" value="NM_000559.3"/>
    <property type="RefSeq protein sequence ID" value="NP_000550.2"/>
</dbReference>
<dbReference type="UCSC" id="uc001mah.2">
    <property type="organism name" value="human"/>
</dbReference>
<dbReference type="AGR" id="HGNC:4831"/>
<dbReference type="CTD" id="3047"/>
<dbReference type="DisGeNET" id="3047"/>
<dbReference type="GeneCards" id="HBG1"/>
<dbReference type="HGNC" id="HGNC:4831">
    <property type="gene designation" value="HBG1"/>
</dbReference>
<dbReference type="HPA" id="ENSG00000213934">
    <property type="expression patterns" value="Tissue enriched (placenta)"/>
</dbReference>
<dbReference type="MalaCards" id="HBG1"/>
<dbReference type="MIM" id="142200">
    <property type="type" value="gene"/>
</dbReference>
<dbReference type="neXtProt" id="NX_P69891"/>
<dbReference type="OpenTargets" id="ENSG00000213934"/>
<dbReference type="Orphanet" id="231237">
    <property type="disease" value="Delta-beta-thalassemia"/>
</dbReference>
<dbReference type="Orphanet" id="46532">
    <property type="disease" value="Hereditary persistence of fetal hemoglobin-beta-thalassemia syndrome"/>
</dbReference>
<dbReference type="Orphanet" id="251380">
    <property type="disease" value="Hereditary persistence of fetal hemoglobin-sickle cell disease syndrome"/>
</dbReference>
<dbReference type="PharmGKB" id="PA29206"/>
<dbReference type="VEuPathDB" id="HostDB:ENSG00000213934"/>
<dbReference type="GeneTree" id="ENSGT00940000162659"/>
<dbReference type="HOGENOM" id="CLU_003827_10_0_1"/>
<dbReference type="InParanoid" id="P69891"/>
<dbReference type="OMA" id="AVIANMW"/>
<dbReference type="OrthoDB" id="9886081at2759"/>
<dbReference type="PAN-GO" id="P69891">
    <property type="GO annotations" value="10 GO annotations based on evolutionary models"/>
</dbReference>
<dbReference type="PhylomeDB" id="P69891"/>
<dbReference type="TreeFam" id="TF333268"/>
<dbReference type="PathwayCommons" id="P69891"/>
<dbReference type="Reactome" id="R-HSA-983231">
    <property type="pathway name" value="Factors involved in megakaryocyte development and platelet production"/>
</dbReference>
<dbReference type="SignaLink" id="P69891"/>
<dbReference type="SIGNOR" id="P69891"/>
<dbReference type="BioGRID-ORCS" id="3047">
    <property type="hits" value="11 hits in 1031 CRISPR screens"/>
</dbReference>
<dbReference type="ChiTaRS" id="HBG1">
    <property type="organism name" value="human"/>
</dbReference>
<dbReference type="EvolutionaryTrace" id="P69891"/>
<dbReference type="GenomeRNAi" id="3047"/>
<dbReference type="Pharos" id="P69891">
    <property type="development level" value="Tbio"/>
</dbReference>
<dbReference type="PRO" id="PR:P69891"/>
<dbReference type="Proteomes" id="UP000005640">
    <property type="component" value="Chromosome 11"/>
</dbReference>
<dbReference type="RNAct" id="P69891">
    <property type="molecule type" value="protein"/>
</dbReference>
<dbReference type="Bgee" id="ENSG00000213934">
    <property type="expression patterns" value="Expressed in placenta and 88 other cell types or tissues"/>
</dbReference>
<dbReference type="ExpressionAtlas" id="P69891">
    <property type="expression patterns" value="baseline and differential"/>
</dbReference>
<dbReference type="GO" id="GO:0005829">
    <property type="term" value="C:cytosol"/>
    <property type="evidence" value="ECO:0000304"/>
    <property type="project" value="Reactome"/>
</dbReference>
<dbReference type="GO" id="GO:0031838">
    <property type="term" value="C:haptoglobin-hemoglobin complex"/>
    <property type="evidence" value="ECO:0000318"/>
    <property type="project" value="GO_Central"/>
</dbReference>
<dbReference type="GO" id="GO:0005833">
    <property type="term" value="C:hemoglobin complex"/>
    <property type="evidence" value="ECO:0000353"/>
    <property type="project" value="ComplexPortal"/>
</dbReference>
<dbReference type="GO" id="GO:0020037">
    <property type="term" value="F:heme binding"/>
    <property type="evidence" value="ECO:0000318"/>
    <property type="project" value="GO_Central"/>
</dbReference>
<dbReference type="GO" id="GO:0031721">
    <property type="term" value="F:hemoglobin alpha binding"/>
    <property type="evidence" value="ECO:0000318"/>
    <property type="project" value="GO_Central"/>
</dbReference>
<dbReference type="GO" id="GO:0046872">
    <property type="term" value="F:metal ion binding"/>
    <property type="evidence" value="ECO:0007669"/>
    <property type="project" value="UniProtKB-KW"/>
</dbReference>
<dbReference type="GO" id="GO:0019825">
    <property type="term" value="F:oxygen binding"/>
    <property type="evidence" value="ECO:0000318"/>
    <property type="project" value="GO_Central"/>
</dbReference>
<dbReference type="GO" id="GO:0005344">
    <property type="term" value="F:oxygen carrier activity"/>
    <property type="evidence" value="ECO:0000314"/>
    <property type="project" value="UniProt"/>
</dbReference>
<dbReference type="GO" id="GO:0015670">
    <property type="term" value="P:carbon dioxide transport"/>
    <property type="evidence" value="ECO:0000303"/>
    <property type="project" value="ComplexPortal"/>
</dbReference>
<dbReference type="GO" id="GO:0098869">
    <property type="term" value="P:cellular oxidant detoxification"/>
    <property type="evidence" value="ECO:0007669"/>
    <property type="project" value="GOC"/>
</dbReference>
<dbReference type="GO" id="GO:0042744">
    <property type="term" value="P:hydrogen peroxide catabolic process"/>
    <property type="evidence" value="ECO:0000318"/>
    <property type="project" value="GO_Central"/>
</dbReference>
<dbReference type="GO" id="GO:0015671">
    <property type="term" value="P:oxygen transport"/>
    <property type="evidence" value="ECO:0000314"/>
    <property type="project" value="UniProt"/>
</dbReference>
<dbReference type="CDD" id="cd08925">
    <property type="entry name" value="Hb-beta-like"/>
    <property type="match status" value="1"/>
</dbReference>
<dbReference type="FunFam" id="1.10.490.10:FF:000001">
    <property type="entry name" value="Hemoglobin subunit beta"/>
    <property type="match status" value="1"/>
</dbReference>
<dbReference type="Gene3D" id="1.10.490.10">
    <property type="entry name" value="Globins"/>
    <property type="match status" value="1"/>
</dbReference>
<dbReference type="InterPro" id="IPR000971">
    <property type="entry name" value="Globin"/>
</dbReference>
<dbReference type="InterPro" id="IPR009050">
    <property type="entry name" value="Globin-like_sf"/>
</dbReference>
<dbReference type="InterPro" id="IPR012292">
    <property type="entry name" value="Globin/Proto"/>
</dbReference>
<dbReference type="InterPro" id="IPR002337">
    <property type="entry name" value="Hemoglobin_b"/>
</dbReference>
<dbReference type="InterPro" id="IPR050056">
    <property type="entry name" value="Hemoglobin_oxygen_transport"/>
</dbReference>
<dbReference type="PANTHER" id="PTHR11442">
    <property type="entry name" value="HEMOGLOBIN FAMILY MEMBER"/>
    <property type="match status" value="1"/>
</dbReference>
<dbReference type="PANTHER" id="PTHR11442:SF52">
    <property type="entry name" value="HEMOGLOBIN SUBUNIT GAMMA-1"/>
    <property type="match status" value="1"/>
</dbReference>
<dbReference type="Pfam" id="PF00042">
    <property type="entry name" value="Globin"/>
    <property type="match status" value="1"/>
</dbReference>
<dbReference type="PRINTS" id="PR00814">
    <property type="entry name" value="BETAHAEM"/>
</dbReference>
<dbReference type="SUPFAM" id="SSF46458">
    <property type="entry name" value="Globin-like"/>
    <property type="match status" value="1"/>
</dbReference>
<dbReference type="PROSITE" id="PS01033">
    <property type="entry name" value="GLOBIN"/>
    <property type="match status" value="1"/>
</dbReference>
<reference key="1">
    <citation type="journal article" date="1980" name="Cell">
        <title>Human fetal G gamma- and A gamma-globin genes: complete nucleotide sequences suggest that DNA can be exchanged between these duplicated genes.</title>
        <authorList>
            <person name="Slightom J.L."/>
            <person name="Blechl A.E."/>
            <person name="Smithies O."/>
        </authorList>
    </citation>
    <scope>NUCLEOTIDE SEQUENCE [GENOMIC DNA]</scope>
    <scope>VARIANT ILE-76</scope>
</reference>
<reference key="2">
    <citation type="journal article" date="1981" name="Cell">
        <title>A history of the human fetal globin gene duplication.</title>
        <authorList>
            <person name="Shen S."/>
            <person name="Slightom J.L."/>
            <person name="Smithies O."/>
        </authorList>
    </citation>
    <scope>NUCLEOTIDE SEQUENCE [GENOMIC DNA]</scope>
    <scope>VARIANT ILE-76</scope>
</reference>
<reference key="3">
    <citation type="submission" date="1999-02" db="EMBL/GenBank/DDBJ databases">
        <title>Functional prediction of the coding sequences of 75 new genes deduced by analysis of cDNA clones from human fetal liver.</title>
        <authorList>
            <person name="Zhang C."/>
            <person name="Yu Y."/>
            <person name="Zhang S."/>
            <person name="Wei H."/>
            <person name="Bi J."/>
            <person name="Zhou G."/>
            <person name="Dong C."/>
            <person name="Zai Y."/>
            <person name="Xu W."/>
            <person name="Gao F."/>
            <person name="Liu M."/>
            <person name="He F."/>
        </authorList>
    </citation>
    <scope>NUCLEOTIDE SEQUENCE [LARGE SCALE MRNA]</scope>
    <scope>VARIANT ILE-76</scope>
    <source>
        <tissue>Fetal liver</tissue>
    </source>
</reference>
<reference key="4">
    <citation type="submission" date="2005-09" db="EMBL/GenBank/DDBJ databases">
        <authorList>
            <person name="Mural R.J."/>
            <person name="Istrail S."/>
            <person name="Sutton G.G."/>
            <person name="Florea L."/>
            <person name="Halpern A.L."/>
            <person name="Mobarry C.M."/>
            <person name="Lippert R."/>
            <person name="Walenz B."/>
            <person name="Shatkay H."/>
            <person name="Dew I."/>
            <person name="Miller J.R."/>
            <person name="Flanigan M.J."/>
            <person name="Edwards N.J."/>
            <person name="Bolanos R."/>
            <person name="Fasulo D."/>
            <person name="Halldorsson B.V."/>
            <person name="Hannenhalli S."/>
            <person name="Turner R."/>
            <person name="Yooseph S."/>
            <person name="Lu F."/>
            <person name="Nusskern D.R."/>
            <person name="Shue B.C."/>
            <person name="Zheng X.H."/>
            <person name="Zhong F."/>
            <person name="Delcher A.L."/>
            <person name="Huson D.H."/>
            <person name="Kravitz S.A."/>
            <person name="Mouchard L."/>
            <person name="Reinert K."/>
            <person name="Remington K.A."/>
            <person name="Clark A.G."/>
            <person name="Waterman M.S."/>
            <person name="Eichler E.E."/>
            <person name="Adams M.D."/>
            <person name="Hunkapiller M.W."/>
            <person name="Myers E.W."/>
            <person name="Venter J.C."/>
        </authorList>
    </citation>
    <scope>NUCLEOTIDE SEQUENCE [LARGE SCALE GENOMIC DNA]</scope>
    <scope>VARIANT ILE-76</scope>
</reference>
<reference key="5">
    <citation type="journal article" date="2004" name="Genome Res.">
        <title>The status, quality, and expansion of the NIH full-length cDNA project: the Mammalian Gene Collection (MGC).</title>
        <authorList>
            <consortium name="The MGC Project Team"/>
        </authorList>
    </citation>
    <scope>NUCLEOTIDE SEQUENCE [LARGE SCALE MRNA]</scope>
    <scope>VARIANT ILE-76</scope>
    <source>
        <tissue>Lung</tissue>
        <tissue>Placenta</tissue>
    </source>
</reference>
<reference key="6">
    <citation type="submission" date="2002-02" db="EMBL/GenBank/DDBJ databases">
        <title>Homo sapiens HBG1 gene with a 4 bp deletion upstream of the promoter region.</title>
        <authorList>
            <person name="Seelig H.-P."/>
            <person name="Vogel M."/>
            <person name="Wiemann C."/>
            <person name="Renz M."/>
        </authorList>
    </citation>
    <scope>NUCLEOTIDE SEQUENCE [GENOMIC DNA] OF 1-30</scope>
</reference>
<reference key="7">
    <citation type="submission" date="2008-12" db="UniProtKB">
        <authorList>
            <person name="Lubec G."/>
            <person name="Afjehi-Sadat L."/>
            <person name="Chen W.-Q."/>
            <person name="Sun Y."/>
        </authorList>
    </citation>
    <scope>PROTEIN SEQUENCE OF 2-60; 67-77 AND 84-145</scope>
    <scope>IDENTIFICATION BY MASS SPECTROMETRY</scope>
    <source>
        <tissue>Brain</tissue>
        <tissue>Cajal-Retzius cell</tissue>
        <tissue>Fetal brain cortex</tissue>
    </source>
</reference>
<reference key="8">
    <citation type="journal article" date="1993" name="J. Chromatogr. A">
        <title>The M gamma chain of human fetal hemoglobin is an A gamma chain with an in vitro modification of gamma 141 leucine to hydroxyleucine.</title>
        <authorList>
            <person name="Wilson J.B."/>
            <person name="Brennan S.O."/>
            <person name="Allen J."/>
            <person name="Shaw J.G."/>
            <person name="Gu L.H."/>
            <person name="Huisman T.H."/>
        </authorList>
    </citation>
    <scope>MODIFICATION AT LEU-142</scope>
</reference>
<reference key="9">
    <citation type="journal article" date="2005" name="J. Biol. Chem.">
        <title>{gamma}-Globin gene expression in chemical inducer of dimerization (CID)-dependent multipotential cells established from human {beta}-globin locus yeast artificial chromosome ({beta}-YAC) transgenic mice.</title>
        <authorList>
            <person name="Blau C.A."/>
            <person name="Barbas C.F."/>
            <person name="Bomhoff A.L."/>
            <person name="Neades R."/>
            <person name="Yan J."/>
            <person name="Navas P.A."/>
            <person name="Peterson K.R."/>
        </authorList>
    </citation>
    <scope>INDUCTION</scope>
</reference>
<reference key="10">
    <citation type="journal article" date="2010" name="Prenat. Diagn.">
        <title>Haemoglobin level, proportion of haemoglobin Bart's and haemoglobin Portland in fetuses affected by homozygous alpha0-thalassemia from 12 to 40 weeks' gestation.</title>
        <authorList>
            <person name="Li T.K."/>
            <person name="Leung K.Y."/>
            <person name="Lam Y.H."/>
            <person name="Tang M.H."/>
            <person name="Chan V."/>
        </authorList>
    </citation>
    <scope>SUBUNIT</scope>
    <scope>DEVELOPMENTAL STAGE</scope>
</reference>
<reference key="11">
    <citation type="journal article" date="2011" name="BMC Syst. Biol.">
        <title>Initial characterization of the human central proteome.</title>
        <authorList>
            <person name="Burkard T.R."/>
            <person name="Planyavsky M."/>
            <person name="Kaupe I."/>
            <person name="Breitwieser F.P."/>
            <person name="Buerckstuemmer T."/>
            <person name="Bennett K.L."/>
            <person name="Superti-Furga G."/>
            <person name="Colinge J."/>
        </authorList>
    </citation>
    <scope>IDENTIFICATION BY MASS SPECTROMETRY [LARGE SCALE ANALYSIS]</scope>
</reference>
<reference key="12">
    <citation type="journal article" date="2011" name="Korean J. Hematol.">
        <title>Hemoglobin F level in different hemoglobin variants.</title>
        <authorList>
            <person name="Olufemi A.E."/>
            <person name="Sola O.B."/>
            <person name="Oluwaseyi B.E."/>
            <person name="Ajani R.A."/>
            <person name="Olusoji M.O."/>
            <person name="Olubunmi H.R."/>
        </authorList>
    </citation>
    <scope>SUBUNIT</scope>
    <scope>DEVELOPMENTAL STAGE</scope>
</reference>
<reference key="13">
    <citation type="journal article" date="2012" name="Blood">
        <title>Fetal hemoglobin levels and morbidity in untransfused patients with beta-thalassemia intermedia.</title>
        <authorList>
            <person name="Musallam K.M."/>
            <person name="Sankaran V.G."/>
            <person name="Cappellini M.D."/>
            <person name="Duca L."/>
            <person name="Nathan D.G."/>
            <person name="Taher A.T."/>
        </authorList>
    </citation>
    <scope>FUNCTION</scope>
    <scope>SUBUNIT</scope>
    <scope>DEVELOPMENTAL STAGE</scope>
</reference>
<reference key="14">
    <citation type="journal article" date="2013" name="J. Proteome Res.">
        <title>Toward a comprehensive characterization of a human cancer cell phosphoproteome.</title>
        <authorList>
            <person name="Zhou H."/>
            <person name="Di Palma S."/>
            <person name="Preisinger C."/>
            <person name="Peng M."/>
            <person name="Polat A.N."/>
            <person name="Heck A.J."/>
            <person name="Mohammed S."/>
        </authorList>
    </citation>
    <scope>PHOSPHORYLATION [LARGE SCALE ANALYSIS] AT SER-45; SER-51; SER-53 AND SER-140</scope>
    <scope>IDENTIFICATION BY MASS SPECTROMETRY [LARGE SCALE ANALYSIS]</scope>
    <source>
        <tissue>Erythroleukemia</tissue>
    </source>
</reference>
<reference key="15">
    <citation type="journal article" date="2001" name="Protein Sci.">
        <title>Oligomerization and ligand binding in a homotetrameric hemoglobin: two high-resolution crystal structures of hemoglobin Bart's (gamma(4)), a marker for alpha-thalassemia.</title>
        <authorList>
            <person name="Kidd R.D."/>
            <person name="Baker H.M."/>
            <person name="Mathews A.J."/>
            <person name="Brittain T."/>
            <person name="Baker E.N."/>
        </authorList>
    </citation>
    <scope>X-RAY CRYSTALLOGRAPHY (1.70 ANGSTROMS) OF 2-147 IN COMPLEX WITH HEME</scope>
    <scope>FUNCTION</scope>
    <scope>SUBUNIT</scope>
    <scope>HOMOTETRAMER</scope>
</reference>
<reference key="16">
    <citation type="journal article" date="1971" name="J. Biol. Chem.">
        <title>Human fetal hemoglobin F 1. Acetylation status.</title>
        <authorList>
            <person name="Stegink L.D."/>
            <person name="Meyer P.D."/>
            <person name="Brummel M.C."/>
        </authorList>
    </citation>
    <scope>ACETYLATION AT GLY-2</scope>
</reference>
<reference key="17">
    <citation type="journal article" date="1988" name="Hemoglobin">
        <title>Hb F-Baskent or alpha 2A gamma 128(H6)Ala--&gt;Thr.</title>
        <authorList>
            <person name="Altay C."/>
            <person name="Gurgey A."/>
            <person name="Wilson J.B."/>
            <person name="Hu H."/>
            <person name="Webber B.B."/>
            <person name="Kutlar F."/>
            <person name="Huisman T.H.J."/>
        </authorList>
    </citation>
    <scope>VARIANT BASKENT THR-129</scope>
</reference>
<reference key="18">
    <citation type="journal article" date="1985" name="Hemoglobin">
        <title>Hb F-Beech Island or alpha 2A gamma 2(53)(D4)Ala--&gt;Asp.</title>
        <authorList>
            <person name="Chen S.S."/>
            <person name="Wilson J.B."/>
            <person name="Webber B.B."/>
            <person name="Huisman T.H.J."/>
        </authorList>
    </citation>
    <scope>VARIANT BEECH ISLAND ASP-54</scope>
</reference>
<reference key="19">
    <citation type="journal article" date="1982" name="Hemoglobin">
        <title>Hb F-Bonaire-Ga or alpha 2 A gamma 2 39(C5) Gln replaced by Arg, characterized by high pressure liquid chromatographic and microsequencing procedures.</title>
        <authorList>
            <person name="Nakatsuji T."/>
            <person name="Headlee M."/>
            <person name="Lam H."/>
            <person name="Wilson J.B."/>
            <person name="Huisman T.H.J."/>
        </authorList>
    </citation>
    <scope>VARIANT BONAIRE ARG-40</scope>
</reference>
<reference key="20">
    <citation type="journal article" date="1983" name="Hemoglobin">
        <title>Hb F-Calluna or alpha 2 gamma 2(12 Thr replaced by Arg; 75Ile; 136Ala) in a Caucasian baby.</title>
        <authorList>
            <person name="Nakatsuji T."/>
            <person name="Lam H."/>
            <person name="Huisman T.H.J."/>
        </authorList>
    </citation>
    <scope>VARIANT CALLUNA ARG-13</scope>
</reference>
<reference key="21">
    <citation type="journal article" date="1985" name="Hemoglobin">
        <title>Hb F-Cobb or alpha(2)A gamma(2)37(C3)Trp--&gt;Gly.</title>
        <authorList>
            <person name="Chen S.S."/>
            <person name="Webber B.B."/>
            <person name="Kutlar A."/>
            <person name="Wilson J.B."/>
            <person name="Huisman T.H.J."/>
        </authorList>
    </citation>
    <scope>VARIANT COBB GLY-38</scope>
</reference>
<reference key="22">
    <citation type="journal article" date="1985" name="Hemoglobin">
        <title>Hb F-Dammam or alpha 2A gamma 2(79) (EF3) Asp--&gt;Asn.</title>
        <authorList>
            <person name="Al-Awamy B.H."/>
            <person name="Niazi G.A."/>
            <person name="Al-Mouzan M.I."/>
            <person name="Wilson J.B."/>
            <person name="Chen S.S."/>
            <person name="Webber B.B."/>
            <person name="Huisman T.H.J."/>
        </authorList>
    </citation>
    <scope>VARIANT DAMMAM ASN-80</scope>
</reference>
<reference key="23">
    <citation type="journal article" date="1974" name="Br. J. Haematol.">
        <title>Genetic haemoglobin abnormalities in about 9000 Black and 7000 White newborns; haemoglobin F Dickinson (Agamma97His-Arg), a new variant.</title>
        <authorList>
            <person name="Schneider R.G."/>
            <person name="Haggard M.E."/>
            <person name="Gustavson L.P."/>
            <person name="Brimhall B."/>
            <person name="Jones R.T."/>
        </authorList>
    </citation>
    <scope>VARIANT DICKINSON ARG-98</scope>
</reference>
<reference key="24">
    <citation type="journal article" date="1989" name="Hemoglobin">
        <title>Hb F-Fukuyama or A gamma T43(CD2)Asp--&gt;Asn.</title>
        <authorList>
            <person name="Hidaka K."/>
            <person name="Iuchi I."/>
            <person name="Nakahara H."/>
            <person name="Iwakawa G."/>
        </authorList>
    </citation>
    <scope>VARIANT FUKUYAMA ASN-44</scope>
</reference>
<reference key="25">
    <citation type="journal article" date="1967" name="BMJ">
        <title>Haemoglobin F Hull (gamma-121 glutamic acid--&gt;lysine), homologous with haemoglobins O Arab and O Indonesia.</title>
        <authorList>
            <person name="Sacker L.S."/>
            <person name="Beale D."/>
            <person name="Black A.J."/>
            <person name="Huntsman R.G."/>
            <person name="Lehmann H."/>
            <person name="Lorkin P.A."/>
        </authorList>
    </citation>
    <scope>VARIANT HULL LYS-122</scope>
</reference>
<reference key="26">
    <citation type="journal article" date="1981" name="Hemoglobin">
        <title>Survey of cord blood hemoglobin in Japan and identification of two new gamma chain variants.</title>
        <authorList>
            <person name="Fuyuno K."/>
            <person name="Torigoe T."/>
            <person name="Ohba Y."/>
            <person name="Matsuoka M."/>
            <person name="Miyaji T."/>
        </authorList>
    </citation>
    <scope>VARIANT IWATA ARG-73</scope>
</reference>
<reference key="27">
    <citation type="journal article" date="1983" name="Biochim. Biophys. Acta">
        <title>Characterization of a new fetal hemoglobin variant, Hb F Izumi A gamma 6Glu replaced by Gly, by molecular secondary ion mass spectrometry.</title>
        <authorList>
            <person name="Wada Y."/>
            <person name="Hayashi A."/>
            <person name="Masanori F."/>
            <person name="Katakuse I."/>
            <person name="Ichihara T."/>
            <person name="Nakabushi H."/>
            <person name="Matsuo T."/>
            <person name="Sakurai T."/>
            <person name="Matsuda H."/>
        </authorList>
    </citation>
    <scope>VARIANT IZUMI GLY-7</scope>
</reference>
<reference key="28">
    <citation type="journal article" date="1970" name="Br. J. Haematol.">
        <title>Haemoglobin F Jamaica (alpha-2 gamma-2 61 Lys leads to Glu; 136 Ala).</title>
        <authorList>
            <person name="Ahern E.J."/>
            <person name="Jones R.T."/>
            <person name="Brimhall B."/>
            <person name="Gray R.H."/>
        </authorList>
    </citation>
    <scope>VARIANT JAMAICA GLU-62</scope>
</reference>
<reference key="29">
    <citation type="journal article" date="1990" name="Hemoglobin">
        <title>Hb F-Jiangsu, the first gamma chain variant with a valine-&gt;methionine substitution: alpha 2A gamma 2 134(H12)Val-&gt;Met.</title>
        <authorList>
            <person name="Plaseska D."/>
            <person name="Kutlar F."/>
            <person name="Wilson J.B."/>
            <person name="Webber B.B."/>
            <person name="Zeng Y.-T."/>
            <person name="Huisman T.H.J."/>
        </authorList>
    </citation>
    <scope>VARIANT JIANGSU MET-135</scope>
</reference>
<reference key="30">
    <citation type="journal article" date="1982" name="Hemoglobin">
        <title>A new gamma chain variant, HB F Kotobuki or AI gamma 6 (A3) Glu leads to Gly.</title>
        <authorList>
            <person name="Yoshinaka H."/>
            <person name="Ohba Y."/>
            <person name="Hattori Y."/>
            <person name="Matsuoka M."/>
            <person name="Miyaji T."/>
            <person name="Fuyuno K."/>
        </authorList>
    </citation>
    <scope>VARIANT KOTOBUKI GLY-7</scope>
</reference>
<reference key="31">
    <citation type="journal article" date="1973" name="Biochim. Biophys. Acta">
        <title>Structural identification of haemoglobin F Kuala Lumpur: alpha2 gamma2 22(B4)Asp leads to Gly; 136 Ala.</title>
        <authorList>
            <person name="Lie-Injo L.E."/>
            <person name="Wiltshire B.B."/>
            <person name="Lehmann H."/>
        </authorList>
    </citation>
    <scope>VARIANT KUALA LUMPUR GLY-23</scope>
</reference>
<reference key="32">
    <citation type="journal article" date="1994" name="Hemoglobin">
        <title>Hb F-Macedonia-I or alpha 2A gamma (2)2(NA2)His--&gt;Gln.</title>
        <authorList>
            <person name="Plaseska D."/>
            <person name="Cepreganova-Krstik B."/>
            <person name="Momirovska A."/>
            <person name="Efremov G.D."/>
        </authorList>
    </citation>
    <scope>VARIANT MACEDONIA-I GLN-3</scope>
</reference>
<reference key="33">
    <citation type="journal article" date="1985" name="Hemoglobin">
        <title>Hb F-Pendergrass, an A gamma I variant with a Pro--&gt;Arg substitution at position gamma 36(C2).</title>
        <authorList>
            <person name="Chen S.S."/>
            <person name="Wilson J.B."/>
            <person name="Huisman T.H.J."/>
        </authorList>
    </citation>
    <scope>VARIANT PENDERGRASS ARG-37</scope>
</reference>
<reference key="34">
    <citation type="journal article" date="1982" name="Hemoglobin">
        <title>A new gamma chain variant: Hb F-Pordenone [gamma 6(A3) Glu replaced by Gln: 75ILE: 136ALA].</title>
        <authorList>
            <person name="Nakatsuji T."/>
            <person name="Webber B."/>
            <person name="Lam H."/>
            <person name="Wilson J.B."/>
            <person name="Huisman T.H.J."/>
            <person name="Sciarratta G.V."/>
            <person name="Sansone G."/>
            <person name="Molaro G.L."/>
        </authorList>
    </citation>
    <scope>VARIANT PORDENONE GLN-7</scope>
</reference>
<reference key="35">
    <citation type="journal article" date="1975" name="Acta Haematol.">
        <title>A new Hb variant: Hb F Sardinia gamma75(E19) isoleucine leads to threonine found in a family with Hb G Philadelphia, beta-chain deficiency and a Lepore-like haemoglobin indistinguishable from Hb A2.</title>
        <authorList>
            <person name="Grifoni V."/>
            <person name="Kamuzora H."/>
            <person name="Lehmann H."/>
            <person name="Charlesworth D."/>
        </authorList>
    </citation>
    <scope>IDENTIFICATION OF VARIANT SARDINIA</scope>
</reference>
<reference key="36">
    <citation type="journal article" date="1983" name="Hemoglobin">
        <title>Hb F-Siena (alpha 2 a gamma t2 121 (GH4) Glu leads to Lys). A new fetal hemoglobin variant.</title>
        <authorList>
            <person name="Care A."/>
            <person name="Marinucci M."/>
            <person name="Massa A."/>
            <person name="Maffi D."/>
            <person name="Sposi N.M."/>
            <person name="Improta T."/>
            <person name="Tentori L."/>
        </authorList>
    </citation>
    <scope>VARIANT SIENA LYS-122</scope>
</reference>
<reference key="37">
    <citation type="journal article" date="1967" name="Br. J. Haematol.">
        <title>Haemoglobin F Texas I(alpha-2,gamma-2-5glu-lys): a variant of haemoglobin F.</title>
        <authorList>
            <person name="Jenkins G.C."/>
            <person name="Beale D."/>
            <person name="Black A.J."/>
            <person name="Huntsman R.G."/>
            <person name="Lehmann H."/>
        </authorList>
    </citation>
    <scope>VARIANT TEXAS-1 LYS-6</scope>
</reference>
<reference key="38">
    <citation type="journal article" date="1975" name="Biochim. Biophys. Acta">
        <title>Haemoglobin F Victoria Jubilee (alpha 2 A gamma 2 80 Asp-Try).</title>
        <authorList>
            <person name="Ahern E."/>
            <person name="Holder W."/>
            <person name="Ahern V."/>
            <person name="Serjeant G.R."/>
            <person name="Serjeant B."/>
            <person name="Forbes M."/>
            <person name="Brimhall B."/>
            <person name="Jones R.T."/>
        </authorList>
    </citation>
    <scope>VARIANT VICTORIA JUBILEE TYR-81</scope>
</reference>
<reference key="39">
    <citation type="journal article" date="1991" name="Hemoglobin">
        <title>Gamma chain abnormalities and gamma-globin gene rearrangements in newborn babies of various populations.</title>
        <authorList>
            <person name="Huisman T.H.J."/>
            <person name="Kutlar F."/>
            <person name="Gu L.H."/>
        </authorList>
    </citation>
    <scope>VARIANT WOODSTOCK LYS-41</scope>
</reference>
<reference key="40">
    <citation type="journal article" date="1987" name="Hemoglobin">
        <title>Hb F-Xin-Su or A gamma I73(E17)Asp--&gt;His: a new slow-moving fetal hemoglobin variant.</title>
        <authorList>
            <person name="Ma M."/>
            <person name="Hu H."/>
            <person name="Kutlar F."/>
            <person name="Wilson J.B."/>
            <person name="Huisman T.H.J."/>
        </authorList>
    </citation>
    <scope>VARIANT XIN-SU HIS-74</scope>
</reference>
<reference key="41">
    <citation type="journal article" date="1987" name="Hemoglobin">
        <title>Hb F-Xinjiang or A gamma T25(B7)Gly--&gt;Arg: a new slow-moving unstable fetal hemoglobin variant.</title>
        <authorList>
            <person name="Hu H."/>
            <person name="Ma M."/>
        </authorList>
    </citation>
    <scope>VARIANT XINJIANG ARG-26</scope>
</reference>
<reference key="42">
    <citation type="journal article" date="1984" name="Am. J. Hematol.">
        <title>HB F-Yamaguchi (gamma 75Thr, gamma 80Asn, gamma 136Ala) is associated with G gamma-thalassemia.</title>
        <authorList>
            <person name="Nakatsuji T."/>
            <person name="Ohba Y."/>
            <person name="Huisman T.H.J."/>
        </authorList>
    </citation>
    <scope>FUNCTION</scope>
    <scope>VARIANT YAMAGUCHI ASN-81</scope>
</reference>
<name>HBG1_HUMAN</name>
<keyword id="KW-0002">3D-structure</keyword>
<keyword id="KW-0007">Acetylation</keyword>
<keyword id="KW-0903">Direct protein sequencing</keyword>
<keyword id="KW-0349">Heme</keyword>
<keyword id="KW-0408">Iron</keyword>
<keyword id="KW-0479">Metal-binding</keyword>
<keyword id="KW-0561">Oxygen transport</keyword>
<keyword id="KW-0597">Phosphoprotein</keyword>
<keyword id="KW-1267">Proteomics identification</keyword>
<keyword id="KW-1185">Reference proteome</keyword>
<keyword id="KW-0702">S-nitrosylation</keyword>
<keyword id="KW-0813">Transport</keyword>
<comment type="function">
    <text evidence="6 13 34">Gamma chains make up the fetal hemoglobin F, in combination with alpha chains.</text>
</comment>
<comment type="subunit">
    <text evidence="6 11 12 13">Heterotetramer of two alpha chains and two gamma chains in fetal hemoglobin (Hb F). In the case of deletions affecting one or more of the alpha chains, the excess gamma chains form homotetramers that exhibit neither Bohr effect nor heme-heme cooperativity (hemoglobin Bart's).</text>
</comment>
<comment type="tissue specificity">
    <text>Red blood cells.</text>
</comment>
<comment type="developmental stage">
    <text evidence="11 12 13">Expressed until four or five weeks after birth. Detected at very low levels in adults, where it constitutes about 1% of the total hemoglobin. In contrast, the levels of fetal hemoglobin F (two alpha chains and two gamma chains) are increased in children and adults with beta-thalassemia or sickle-cell disease. In cases of homozygous alpha-thalassemia, homotetrameric hemoglobin Bart's is highly expressed and is the predominant form of hemoglobin after 10 weeks of gestation. Its levels increase steadily after 10 weeks of gestation and until birth (at protein level).</text>
</comment>
<comment type="induction">
    <text evidence="8">By 5-azacytidine.</text>
</comment>
<comment type="PTM">
    <text evidence="25">Acetylation of Gly-2 converts Hb F to the minor Hb F1.</text>
</comment>
<comment type="polymorphism">
    <text evidence="41">The variant Thr-76 shown in this entry has been called Sardinia.</text>
</comment>
<comment type="similarity">
    <text evidence="4">Belongs to the globin family.</text>
</comment>
<comment type="caution">
    <text evidence="42">The modification form of Leu-142 is subject of controversy and could be the artifactual result of sample handling.</text>
</comment>
<comment type="online information" name="HbVar">
    <link uri="https://globin.bx.psu.edu/cgi-bin/hbvar/query_vars3?mode=directlink&amp;gene=HBG1"/>
    <text>Human hemoglobin variants and thalassemias</text>
</comment>
<proteinExistence type="evidence at protein level"/>
<organism>
    <name type="scientific">Homo sapiens</name>
    <name type="common">Human</name>
    <dbReference type="NCBI Taxonomy" id="9606"/>
    <lineage>
        <taxon>Eukaryota</taxon>
        <taxon>Metazoa</taxon>
        <taxon>Chordata</taxon>
        <taxon>Craniata</taxon>
        <taxon>Vertebrata</taxon>
        <taxon>Euteleostomi</taxon>
        <taxon>Mammalia</taxon>
        <taxon>Eutheria</taxon>
        <taxon>Euarchontoglires</taxon>
        <taxon>Primates</taxon>
        <taxon>Haplorrhini</taxon>
        <taxon>Catarrhini</taxon>
        <taxon>Hominidae</taxon>
        <taxon>Homo</taxon>
    </lineage>
</organism>
<sequence>MGHFTEEDKATITSLWGKVNVEDAGGETLGRLLVVYPWTQRFFDSFGNLSSASAIMGNPKVKAHGKKVLTSLGDATKHLDDLKGTFAQLSELHCDKLHVDPENFKLLGNVLVTVLAIHFGKEFTPEVQASWQKMVTAVASALSSRYH</sequence>
<protein>
    <recommendedName>
        <fullName>Hemoglobin subunit gamma-1</fullName>
    </recommendedName>
    <alternativeName>
        <fullName>Gamma-1-globin</fullName>
    </alternativeName>
    <alternativeName>
        <fullName>Hb F Agamma</fullName>
    </alternativeName>
    <alternativeName>
        <fullName>Hemoglobin gamma-1 chain</fullName>
    </alternativeName>
    <alternativeName>
        <fullName>Hemoglobin gamma-A chain</fullName>
    </alternativeName>
</protein>
<accession>P69891</accession>
<accession>P02096</accession>
<accession>P62027</accession>
<accession>Q549G1</accession>
<accession>Q8TDA1</accession>
<accession>Q96FH7</accession>
<evidence type="ECO:0000250" key="1">
    <source>
        <dbReference type="UniProtKB" id="P61920"/>
    </source>
</evidence>
<evidence type="ECO:0000250" key="2">
    <source>
        <dbReference type="UniProtKB" id="P68871"/>
    </source>
</evidence>
<evidence type="ECO:0000250" key="3">
    <source>
        <dbReference type="UniProtKB" id="P80044"/>
    </source>
</evidence>
<evidence type="ECO:0000255" key="4">
    <source>
        <dbReference type="PROSITE-ProRule" id="PRU00238"/>
    </source>
</evidence>
<evidence type="ECO:0000269" key="5">
    <source>
    </source>
</evidence>
<evidence type="ECO:0000269" key="6">
    <source>
    </source>
</evidence>
<evidence type="ECO:0000269" key="7">
    <source>
    </source>
</evidence>
<evidence type="ECO:0000269" key="8">
    <source>
    </source>
</evidence>
<evidence type="ECO:0000269" key="9">
    <source>
    </source>
</evidence>
<evidence type="ECO:0000269" key="10">
    <source>
    </source>
</evidence>
<evidence type="ECO:0000269" key="11">
    <source>
    </source>
</evidence>
<evidence type="ECO:0000269" key="12">
    <source>
    </source>
</evidence>
<evidence type="ECO:0000269" key="13">
    <source>
    </source>
</evidence>
<evidence type="ECO:0000269" key="14">
    <source>
    </source>
</evidence>
<evidence type="ECO:0000269" key="15">
    <source>
    </source>
</evidence>
<evidence type="ECO:0000269" key="16">
    <source>
    </source>
</evidence>
<evidence type="ECO:0000269" key="17">
    <source>
    </source>
</evidence>
<evidence type="ECO:0000269" key="18">
    <source>
    </source>
</evidence>
<evidence type="ECO:0000269" key="19">
    <source>
    </source>
</evidence>
<evidence type="ECO:0000269" key="20">
    <source>
    </source>
</evidence>
<evidence type="ECO:0000269" key="21">
    <source>
    </source>
</evidence>
<evidence type="ECO:0000269" key="22">
    <source>
    </source>
</evidence>
<evidence type="ECO:0000269" key="23">
    <source>
    </source>
</evidence>
<evidence type="ECO:0000269" key="24">
    <source>
    </source>
</evidence>
<evidence type="ECO:0000269" key="25">
    <source>
    </source>
</evidence>
<evidence type="ECO:0000269" key="26">
    <source>
    </source>
</evidence>
<evidence type="ECO:0000269" key="27">
    <source>
    </source>
</evidence>
<evidence type="ECO:0000269" key="28">
    <source>
    </source>
</evidence>
<evidence type="ECO:0000269" key="29">
    <source>
    </source>
</evidence>
<evidence type="ECO:0000269" key="30">
    <source>
    </source>
</evidence>
<evidence type="ECO:0000269" key="31">
    <source>
    </source>
</evidence>
<evidence type="ECO:0000269" key="32">
    <source>
    </source>
</evidence>
<evidence type="ECO:0000269" key="33">
    <source>
    </source>
</evidence>
<evidence type="ECO:0000269" key="34">
    <source>
    </source>
</evidence>
<evidence type="ECO:0000269" key="35">
    <source>
    </source>
</evidence>
<evidence type="ECO:0000269" key="36">
    <source>
    </source>
</evidence>
<evidence type="ECO:0000269" key="37">
    <source>
    </source>
</evidence>
<evidence type="ECO:0000269" key="38">
    <source>
    </source>
</evidence>
<evidence type="ECO:0000269" key="39">
    <source ref="3"/>
</evidence>
<evidence type="ECO:0000269" key="40">
    <source ref="4"/>
</evidence>
<evidence type="ECO:0000303" key="41">
    <source>
    </source>
</evidence>
<evidence type="ECO:0000305" key="42">
    <source>
    </source>
</evidence>
<evidence type="ECO:0007744" key="43">
    <source>
        <dbReference type="PDB" id="1I3D"/>
    </source>
</evidence>
<evidence type="ECO:0007744" key="44">
    <source>
        <dbReference type="PDB" id="1I3E"/>
    </source>
</evidence>
<evidence type="ECO:0007744" key="45">
    <source>
    </source>
</evidence>
<evidence type="ECO:0007829" key="46">
    <source>
        <dbReference type="PDB" id="1I3D"/>
    </source>
</evidence>
<gene>
    <name type="primary">HBG1</name>
    <name type="ORF">PRO2979</name>
</gene>
<feature type="initiator methionine" description="Removed" evidence="1">
    <location>
        <position position="1"/>
    </location>
</feature>
<feature type="chain" id="PRO_0000053253" description="Hemoglobin subunit gamma-1">
    <location>
        <begin position="2"/>
        <end position="147"/>
    </location>
</feature>
<feature type="domain" description="Globin" evidence="4">
    <location>
        <begin position="3"/>
        <end position="147"/>
    </location>
</feature>
<feature type="binding site" description="distal binding residue" evidence="3">
    <location>
        <position position="64"/>
    </location>
    <ligand>
        <name>heme b</name>
        <dbReference type="ChEBI" id="CHEBI:60344"/>
    </ligand>
    <ligandPart>
        <name>Fe</name>
        <dbReference type="ChEBI" id="CHEBI:18248"/>
    </ligandPart>
</feature>
<feature type="binding site" description="proximal binding residue" evidence="6 43 44">
    <location>
        <position position="93"/>
    </location>
    <ligand>
        <name>heme b</name>
        <dbReference type="ChEBI" id="CHEBI:60344"/>
    </ligand>
    <ligandPart>
        <name>Fe</name>
        <dbReference type="ChEBI" id="CHEBI:18248"/>
    </ligandPart>
</feature>
<feature type="modified residue" description="N-acetylglycine; in form Hb F1" evidence="25">
    <location>
        <position position="2"/>
    </location>
</feature>
<feature type="modified residue" description="Phosphothreonine" evidence="2">
    <location>
        <position position="13"/>
    </location>
</feature>
<feature type="modified residue" description="Phosphoserine" evidence="45">
    <location>
        <position position="45"/>
    </location>
</feature>
<feature type="modified residue" description="Phosphoserine" evidence="45">
    <location>
        <position position="51"/>
    </location>
</feature>
<feature type="modified residue" description="Phosphoserine" evidence="45">
    <location>
        <position position="53"/>
    </location>
</feature>
<feature type="modified residue" description="N6-acetyllysine" evidence="2">
    <location>
        <position position="60"/>
    </location>
</feature>
<feature type="modified residue" description="N6-acetyllysine" evidence="2">
    <location>
        <position position="83"/>
    </location>
</feature>
<feature type="modified residue" description="S-nitrosocysteine" evidence="2">
    <location>
        <position position="94"/>
    </location>
</feature>
<feature type="modified residue" description="Phosphoserine" evidence="45">
    <location>
        <position position="140"/>
    </location>
</feature>
<feature type="sequence variant" id="VAR_003124" description="In Macedonia-I; dbSNP:rs35315638." evidence="38">
    <original>H</original>
    <variation>Q</variation>
    <location>
        <position position="3"/>
    </location>
</feature>
<feature type="sequence variant" id="VAR_003125" description="In Texas-1; dbSNP:rs34427034." evidence="26">
    <original>E</original>
    <variation>K</variation>
    <location>
        <position position="6"/>
    </location>
</feature>
<feature type="sequence variant" id="VAR_003127" description="In Izumi/Kotobuki; dbSNP:rs34432567." evidence="29 33">
    <original>E</original>
    <variation>G</variation>
    <location>
        <position position="7"/>
    </location>
</feature>
<feature type="sequence variant" id="VAR_003128" description="In Pordenone; dbSNP:rs33924825." evidence="30">
    <original>E</original>
    <variation>Q</variation>
    <location>
        <position position="7"/>
    </location>
</feature>
<feature type="sequence variant" id="VAR_003130" description="In Calluna; dbSNP:rs33992775." evidence="35">
    <original>T</original>
    <variation>R</variation>
    <location>
        <position position="13"/>
    </location>
</feature>
<feature type="sequence variant" id="VAR_003135" description="In Kuala Lumpur; dbSNP:rs33970907." evidence="23">
    <original>D</original>
    <variation>G</variation>
    <location>
        <position position="23"/>
    </location>
</feature>
<feature type="sequence variant" id="VAR_003138" description="In Xinjiang; unstable; dbSNP:rs35957832." evidence="17">
    <original>G</original>
    <variation>R</variation>
    <location>
        <position position="26"/>
    </location>
</feature>
<feature type="sequence variant" id="VAR_003141" description="In Pendergrass; dbSNP:rs41404150." evidence="21">
    <original>P</original>
    <variation>R</variation>
    <location>
        <position position="37"/>
    </location>
</feature>
<feature type="sequence variant" id="VAR_003142" description="In Cobb; dbSNP:rs35700518." evidence="16">
    <original>W</original>
    <variation>G</variation>
    <location>
        <position position="38"/>
    </location>
</feature>
<feature type="sequence variant" id="VAR_003143" description="In Bonaire; dbSNP:rs35977759." evidence="31">
    <original>Q</original>
    <variation>R</variation>
    <location>
        <position position="40"/>
    </location>
</feature>
<feature type="sequence variant" id="VAR_003145" description="In Woodstock; dbSNP:rs33974602." evidence="10">
    <original>R</original>
    <variation>K</variation>
    <location>
        <position position="41"/>
    </location>
</feature>
<feature type="sequence variant" id="VAR_003147" description="In Fukuyama; dbSNP:rs41475844." evidence="20">
    <original>D</original>
    <variation>N</variation>
    <location>
        <position position="44"/>
    </location>
</feature>
<feature type="sequence variant" id="VAR_003149" description="In Beech island; dbSNP:rs35746147." evidence="15">
    <original>A</original>
    <variation>D</variation>
    <location>
        <position position="54"/>
    </location>
</feature>
<feature type="sequence variant" id="VAR_003153" description="In Jamaica; dbSNP:rs34747494." evidence="24">
    <original>K</original>
    <variation>E</variation>
    <location>
        <position position="62"/>
    </location>
</feature>
<feature type="sequence variant" id="VAR_003158" description="In Iwata; dbSNP:rs34049890." evidence="28">
    <original>G</original>
    <variation>R</variation>
    <location>
        <position position="73"/>
    </location>
</feature>
<feature type="sequence variant" id="VAR_003160" description="In Xin-su; dbSNP:rs33965337." evidence="18">
    <original>D</original>
    <variation>H</variation>
    <location>
        <position position="74"/>
    </location>
</feature>
<feature type="sequence variant" id="VAR_003159" description="In Forest Park; dbSNP:rs33965337.">
    <original>D</original>
    <variation>N</variation>
    <location>
        <position position="74"/>
    </location>
</feature>
<feature type="sequence variant" id="VAR_003161" description="In dbSNP:rs1061234." evidence="7 36 37 39 40">
    <original>T</original>
    <variation>I</variation>
    <location>
        <position position="76"/>
    </location>
</feature>
<feature type="sequence variant" id="VAR_003163" description="In Dammam; dbSNP:rs34435255." evidence="14">
    <original>D</original>
    <variation>N</variation>
    <location>
        <position position="80"/>
    </location>
</feature>
<feature type="sequence variant" id="VAR_003165" description="In Yamaguchi; dbSNP:rs33947112." evidence="34">
    <original>D</original>
    <variation>N</variation>
    <location>
        <position position="81"/>
    </location>
</feature>
<feature type="sequence variant" id="VAR_003164" description="In Victoria jubilee; dbSNP:rs33947112." evidence="5">
    <original>D</original>
    <variation>Y</variation>
    <location>
        <position position="81"/>
    </location>
</feature>
<feature type="sequence variant" id="VAR_003168" description="In Dickinson; dbSNP:rs34127117." evidence="22">
    <original>H</original>
    <variation>R</variation>
    <location>
        <position position="98"/>
    </location>
</feature>
<feature type="sequence variant" id="VAR_003173" description="In Siena/Hull; dbSNP:rs33963857." evidence="27 32">
    <original>E</original>
    <variation>K</variation>
    <location>
        <position position="122"/>
    </location>
</feature>
<feature type="sequence variant" id="VAR_003175" description="In Baskent; dbSNP:rs41330850." evidence="19">
    <original>A</original>
    <variation>T</variation>
    <location>
        <position position="129"/>
    </location>
</feature>
<feature type="sequence variant" id="VAR_003177" description="In Jiangsu; dbSNP:rs35849660." evidence="9">
    <original>V</original>
    <variation>M</variation>
    <location>
        <position position="135"/>
    </location>
</feature>
<feature type="helix" evidence="46">
    <location>
        <begin position="6"/>
        <end position="17"/>
    </location>
</feature>
<feature type="helix" evidence="46">
    <location>
        <begin position="21"/>
        <end position="35"/>
    </location>
</feature>
<feature type="helix" evidence="46">
    <location>
        <begin position="37"/>
        <end position="46"/>
    </location>
</feature>
<feature type="helix" evidence="46">
    <location>
        <begin position="52"/>
        <end position="57"/>
    </location>
</feature>
<feature type="helix" evidence="46">
    <location>
        <begin position="59"/>
        <end position="75"/>
    </location>
</feature>
<feature type="helix" evidence="46">
    <location>
        <begin position="76"/>
        <end position="81"/>
    </location>
</feature>
<feature type="helix" evidence="46">
    <location>
        <begin position="82"/>
        <end position="85"/>
    </location>
</feature>
<feature type="helix" evidence="46">
    <location>
        <begin position="87"/>
        <end position="94"/>
    </location>
</feature>
<feature type="turn" evidence="46">
    <location>
        <begin position="95"/>
        <end position="97"/>
    </location>
</feature>
<feature type="helix" evidence="46">
    <location>
        <begin position="101"/>
        <end position="119"/>
    </location>
</feature>
<feature type="helix" evidence="46">
    <location>
        <begin position="120"/>
        <end position="122"/>
    </location>
</feature>
<feature type="helix" evidence="46">
    <location>
        <begin position="125"/>
        <end position="142"/>
    </location>
</feature>
<feature type="helix" evidence="46">
    <location>
        <begin position="144"/>
        <end position="146"/>
    </location>
</feature>